<dbReference type="EC" id="2.1.1.33" evidence="2"/>
<dbReference type="EMBL" id="CP000853">
    <property type="protein sequence ID" value="ABW19656.1"/>
    <property type="molecule type" value="Genomic_DNA"/>
</dbReference>
<dbReference type="RefSeq" id="WP_012159965.1">
    <property type="nucleotide sequence ID" value="NC_009922.1"/>
</dbReference>
<dbReference type="SMR" id="A8MIM4"/>
<dbReference type="STRING" id="350688.Clos_2120"/>
<dbReference type="KEGG" id="aoe:Clos_2120"/>
<dbReference type="eggNOG" id="COG0220">
    <property type="taxonomic scope" value="Bacteria"/>
</dbReference>
<dbReference type="HOGENOM" id="CLU_050910_2_1_9"/>
<dbReference type="OrthoDB" id="9802090at2"/>
<dbReference type="UniPathway" id="UPA00989"/>
<dbReference type="Proteomes" id="UP000000269">
    <property type="component" value="Chromosome"/>
</dbReference>
<dbReference type="GO" id="GO:0043527">
    <property type="term" value="C:tRNA methyltransferase complex"/>
    <property type="evidence" value="ECO:0007669"/>
    <property type="project" value="TreeGrafter"/>
</dbReference>
<dbReference type="GO" id="GO:0008176">
    <property type="term" value="F:tRNA (guanine(46)-N7)-methyltransferase activity"/>
    <property type="evidence" value="ECO:0007669"/>
    <property type="project" value="UniProtKB-UniRule"/>
</dbReference>
<dbReference type="FunFam" id="3.40.50.150:FF:000035">
    <property type="entry name" value="tRNA (guanine-N(7)-)-methyltransferase"/>
    <property type="match status" value="1"/>
</dbReference>
<dbReference type="Gene3D" id="3.40.50.150">
    <property type="entry name" value="Vaccinia Virus protein VP39"/>
    <property type="match status" value="1"/>
</dbReference>
<dbReference type="HAMAP" id="MF_01057">
    <property type="entry name" value="tRNA_methyltr_TrmB"/>
    <property type="match status" value="1"/>
</dbReference>
<dbReference type="InterPro" id="IPR029063">
    <property type="entry name" value="SAM-dependent_MTases_sf"/>
</dbReference>
<dbReference type="InterPro" id="IPR003358">
    <property type="entry name" value="tRNA_(Gua-N-7)_MeTrfase_Trmb"/>
</dbReference>
<dbReference type="InterPro" id="IPR055361">
    <property type="entry name" value="tRNA_methyltr_TrmB_bact"/>
</dbReference>
<dbReference type="NCBIfam" id="NF001080">
    <property type="entry name" value="PRK00121.2-2"/>
    <property type="match status" value="1"/>
</dbReference>
<dbReference type="NCBIfam" id="TIGR00091">
    <property type="entry name" value="tRNA (guanosine(46)-N7)-methyltransferase TrmB"/>
    <property type="match status" value="1"/>
</dbReference>
<dbReference type="PANTHER" id="PTHR23417">
    <property type="entry name" value="3-DEOXY-D-MANNO-OCTULOSONIC-ACID TRANSFERASE/TRNA GUANINE-N 7 - -METHYLTRANSFERASE"/>
    <property type="match status" value="1"/>
</dbReference>
<dbReference type="PANTHER" id="PTHR23417:SF14">
    <property type="entry name" value="PENTACOTRIPEPTIDE-REPEAT REGION OF PRORP DOMAIN-CONTAINING PROTEIN"/>
    <property type="match status" value="1"/>
</dbReference>
<dbReference type="Pfam" id="PF02390">
    <property type="entry name" value="Methyltransf_4"/>
    <property type="match status" value="1"/>
</dbReference>
<dbReference type="SUPFAM" id="SSF53335">
    <property type="entry name" value="S-adenosyl-L-methionine-dependent methyltransferases"/>
    <property type="match status" value="1"/>
</dbReference>
<dbReference type="PROSITE" id="PS51625">
    <property type="entry name" value="SAM_MT_TRMB"/>
    <property type="match status" value="1"/>
</dbReference>
<sequence>MRVRNISNAKELLKEYKEYVAAPQLFKEQWHTYFENQNPIHIEIGMGKGQFIRTLAKLNPNINYIGLEKVEELVLKSVRSIEAEEICNISLINWNAVKLEEILGEGEIERIYLNFSDPWPKARHDKRRLTHHGFLDIYQKLLKDHGEIHLKTDSKALFEFSLEQFTQKNFTLVEVIEDLHGSTDKEIAKTEYEEKFIAEGKPIYKCIARIE</sequence>
<organism>
    <name type="scientific">Alkaliphilus oremlandii (strain OhILAs)</name>
    <name type="common">Clostridium oremlandii (strain OhILAs)</name>
    <dbReference type="NCBI Taxonomy" id="350688"/>
    <lineage>
        <taxon>Bacteria</taxon>
        <taxon>Bacillati</taxon>
        <taxon>Bacillota</taxon>
        <taxon>Clostridia</taxon>
        <taxon>Peptostreptococcales</taxon>
        <taxon>Natronincolaceae</taxon>
        <taxon>Alkaliphilus</taxon>
    </lineage>
</organism>
<keyword id="KW-0489">Methyltransferase</keyword>
<keyword id="KW-1185">Reference proteome</keyword>
<keyword id="KW-0949">S-adenosyl-L-methionine</keyword>
<keyword id="KW-0808">Transferase</keyword>
<keyword id="KW-0819">tRNA processing</keyword>
<name>TRMB_ALKOO</name>
<accession>A8MIM4</accession>
<feature type="chain" id="PRO_1000064386" description="tRNA (guanine-N(7)-)-methyltransferase">
    <location>
        <begin position="1"/>
        <end position="211"/>
    </location>
</feature>
<feature type="active site" evidence="1">
    <location>
        <position position="117"/>
    </location>
</feature>
<feature type="binding site" evidence="2">
    <location>
        <position position="43"/>
    </location>
    <ligand>
        <name>S-adenosyl-L-methionine</name>
        <dbReference type="ChEBI" id="CHEBI:59789"/>
    </ligand>
</feature>
<feature type="binding site" evidence="2">
    <location>
        <position position="68"/>
    </location>
    <ligand>
        <name>S-adenosyl-L-methionine</name>
        <dbReference type="ChEBI" id="CHEBI:59789"/>
    </ligand>
</feature>
<feature type="binding site" evidence="2">
    <location>
        <position position="95"/>
    </location>
    <ligand>
        <name>S-adenosyl-L-methionine</name>
        <dbReference type="ChEBI" id="CHEBI:59789"/>
    </ligand>
</feature>
<feature type="binding site" evidence="2">
    <location>
        <position position="117"/>
    </location>
    <ligand>
        <name>S-adenosyl-L-methionine</name>
        <dbReference type="ChEBI" id="CHEBI:59789"/>
    </ligand>
</feature>
<feature type="binding site" evidence="2">
    <location>
        <position position="121"/>
    </location>
    <ligand>
        <name>substrate</name>
    </ligand>
</feature>
<feature type="binding site" evidence="2">
    <location>
        <position position="153"/>
    </location>
    <ligand>
        <name>substrate</name>
    </ligand>
</feature>
<feature type="binding site" evidence="2">
    <location>
        <begin position="190"/>
        <end position="193"/>
    </location>
    <ligand>
        <name>substrate</name>
    </ligand>
</feature>
<proteinExistence type="inferred from homology"/>
<evidence type="ECO:0000250" key="1"/>
<evidence type="ECO:0000255" key="2">
    <source>
        <dbReference type="HAMAP-Rule" id="MF_01057"/>
    </source>
</evidence>
<protein>
    <recommendedName>
        <fullName evidence="2">tRNA (guanine-N(7)-)-methyltransferase</fullName>
        <ecNumber evidence="2">2.1.1.33</ecNumber>
    </recommendedName>
    <alternativeName>
        <fullName evidence="2">tRNA (guanine(46)-N(7))-methyltransferase</fullName>
    </alternativeName>
    <alternativeName>
        <fullName evidence="2">tRNA(m7G46)-methyltransferase</fullName>
    </alternativeName>
</protein>
<reference key="1">
    <citation type="submission" date="2007-10" db="EMBL/GenBank/DDBJ databases">
        <title>Complete genome of Alkaliphilus oremlandii OhILAs.</title>
        <authorList>
            <person name="Copeland A."/>
            <person name="Lucas S."/>
            <person name="Lapidus A."/>
            <person name="Barry K."/>
            <person name="Detter J.C."/>
            <person name="Glavina del Rio T."/>
            <person name="Hammon N."/>
            <person name="Israni S."/>
            <person name="Dalin E."/>
            <person name="Tice H."/>
            <person name="Pitluck S."/>
            <person name="Chain P."/>
            <person name="Malfatti S."/>
            <person name="Shin M."/>
            <person name="Vergez L."/>
            <person name="Schmutz J."/>
            <person name="Larimer F."/>
            <person name="Land M."/>
            <person name="Hauser L."/>
            <person name="Kyrpides N."/>
            <person name="Mikhailova N."/>
            <person name="Stolz J.F."/>
            <person name="Dawson A."/>
            <person name="Fisher E."/>
            <person name="Crable B."/>
            <person name="Perera E."/>
            <person name="Lisak J."/>
            <person name="Ranganathan M."/>
            <person name="Basu P."/>
            <person name="Richardson P."/>
        </authorList>
    </citation>
    <scope>NUCLEOTIDE SEQUENCE [LARGE SCALE GENOMIC DNA]</scope>
    <source>
        <strain>OhILAs</strain>
    </source>
</reference>
<gene>
    <name evidence="2" type="primary">trmB</name>
    <name type="ordered locus">Clos_2120</name>
</gene>
<comment type="function">
    <text evidence="2">Catalyzes the formation of N(7)-methylguanine at position 46 (m7G46) in tRNA.</text>
</comment>
<comment type="catalytic activity">
    <reaction evidence="2">
        <text>guanosine(46) in tRNA + S-adenosyl-L-methionine = N(7)-methylguanosine(46) in tRNA + S-adenosyl-L-homocysteine</text>
        <dbReference type="Rhea" id="RHEA:42708"/>
        <dbReference type="Rhea" id="RHEA-COMP:10188"/>
        <dbReference type="Rhea" id="RHEA-COMP:10189"/>
        <dbReference type="ChEBI" id="CHEBI:57856"/>
        <dbReference type="ChEBI" id="CHEBI:59789"/>
        <dbReference type="ChEBI" id="CHEBI:74269"/>
        <dbReference type="ChEBI" id="CHEBI:74480"/>
        <dbReference type="EC" id="2.1.1.33"/>
    </reaction>
</comment>
<comment type="pathway">
    <text evidence="2">tRNA modification; N(7)-methylguanine-tRNA biosynthesis.</text>
</comment>
<comment type="similarity">
    <text evidence="2">Belongs to the class I-like SAM-binding methyltransferase superfamily. TrmB family.</text>
</comment>